<geneLocation type="chloroplast"/>
<protein>
    <recommendedName>
        <fullName evidence="1">DNA-directed RNA polymerase subunit alpha</fullName>
        <shortName evidence="1">PEP</shortName>
        <ecNumber evidence="1">2.7.7.6</ecNumber>
    </recommendedName>
    <alternativeName>
        <fullName evidence="1">Plastid-encoded RNA polymerase subunit alpha</fullName>
        <shortName evidence="1">RNA polymerase subunit alpha</shortName>
    </alternativeName>
</protein>
<sequence length="339" mass="38883">MVREEVAGSTQTLQWKCVESRVDSKRLYYGRFILSPLRKGQADTVGIALRRALLGEIEGTCITRAKFGSVPHEYSTIAGIEESVQEILLNLKEIVLRSNLYGVRDASICVKGPRYITAQDIILPPSVEIVDTAQPIANLTEPIDFCIDLQIKRDRGYQTELRKNYQDGSYPIDAVSMPVRNVNYSIFSCGNGNEKHEILFLEIWTNGSLTPKEALYEASRNLIDLFLPFLHAEEEGTSFEENKNRFTPPLFTFQKRLTNLKKNKKGIPLNSIFIDQLELTSRTYNCLKRANIHTLLDLLSKTEEDLLRIDSFRMEDRKHIWDTLEKHLPIDLLKNKLSF</sequence>
<reference key="1">
    <citation type="journal article" date="1997" name="Mol. Phylogenet. Evol.">
        <title>Phylogenetic analysis of the Triticeae (Poaceae) based on rpoA sequence data.</title>
        <authorList>
            <person name="Petersen G."/>
            <person name="Seberg O."/>
        </authorList>
    </citation>
    <scope>NUCLEOTIDE SEQUENCE [GENOMIC DNA]</scope>
    <source>
        <strain>H6668</strain>
        <tissue>Leaf</tissue>
    </source>
</reference>
<reference key="2">
    <citation type="journal article" date="2002" name="Genome">
        <title>Phylogenetic analysis of North American Elymus and the monogenomic Triticeae (Poaceae) using three chloroplast DNA data sets.</title>
        <authorList>
            <person name="Mason-Gamer R.J."/>
            <person name="Orme N.L."/>
            <person name="Anderson C.M."/>
        </authorList>
    </citation>
    <scope>NUCLEOTIDE SEQUENCE [GENOMIC DNA]</scope>
    <source>
        <strain>-Morrisonsn</strain>
    </source>
</reference>
<accession>P92429</accession>
<accession>Q8MAJ1</accession>
<gene>
    <name evidence="1" type="primary">rpoA</name>
</gene>
<comment type="function">
    <text evidence="1">DNA-dependent RNA polymerase catalyzes the transcription of DNA into RNA using the four ribonucleoside triphosphates as substrates.</text>
</comment>
<comment type="catalytic activity">
    <reaction evidence="1">
        <text>RNA(n) + a ribonucleoside 5'-triphosphate = RNA(n+1) + diphosphate</text>
        <dbReference type="Rhea" id="RHEA:21248"/>
        <dbReference type="Rhea" id="RHEA-COMP:14527"/>
        <dbReference type="Rhea" id="RHEA-COMP:17342"/>
        <dbReference type="ChEBI" id="CHEBI:33019"/>
        <dbReference type="ChEBI" id="CHEBI:61557"/>
        <dbReference type="ChEBI" id="CHEBI:140395"/>
        <dbReference type="EC" id="2.7.7.6"/>
    </reaction>
</comment>
<comment type="subunit">
    <text evidence="1">In plastids the minimal PEP RNA polymerase catalytic core is composed of four subunits: alpha, beta, beta', and beta''. When a (nuclear-encoded) sigma factor is associated with the core the holoenzyme is formed, which can initiate transcription.</text>
</comment>
<comment type="subcellular location">
    <subcellularLocation>
        <location>Plastid</location>
        <location>Chloroplast</location>
    </subcellularLocation>
</comment>
<comment type="domain">
    <text evidence="1">The N-terminal domain is essential for RNAP assembly and basal transcription, whereas the C-terminal domain is involved in interaction with transcriptional regulators and with upstream promoter elements.</text>
</comment>
<comment type="similarity">
    <text evidence="1">Belongs to the RNA polymerase alpha chain family.</text>
</comment>
<feature type="chain" id="PRO_0000175435" description="DNA-directed RNA polymerase subunit alpha">
    <location>
        <begin position="1"/>
        <end position="339"/>
    </location>
</feature>
<feature type="region of interest" description="Alpha N-terminal domain (alpha-NTD)" evidence="1">
    <location>
        <begin position="1"/>
        <end position="233"/>
    </location>
</feature>
<feature type="region of interest" description="Alpha C-terminal domain (alpha-CTD)" evidence="1">
    <location>
        <begin position="264"/>
        <end position="339"/>
    </location>
</feature>
<organism>
    <name type="scientific">Aegilops tauschii</name>
    <name type="common">Tausch's goatgrass</name>
    <name type="synonym">Aegilops squarrosa</name>
    <dbReference type="NCBI Taxonomy" id="37682"/>
    <lineage>
        <taxon>Eukaryota</taxon>
        <taxon>Viridiplantae</taxon>
        <taxon>Streptophyta</taxon>
        <taxon>Embryophyta</taxon>
        <taxon>Tracheophyta</taxon>
        <taxon>Spermatophyta</taxon>
        <taxon>Magnoliopsida</taxon>
        <taxon>Liliopsida</taxon>
        <taxon>Poales</taxon>
        <taxon>Poaceae</taxon>
        <taxon>BOP clade</taxon>
        <taxon>Pooideae</taxon>
        <taxon>Triticodae</taxon>
        <taxon>Triticeae</taxon>
        <taxon>Triticinae</taxon>
        <taxon>Aegilops</taxon>
    </lineage>
</organism>
<evidence type="ECO:0000255" key="1">
    <source>
        <dbReference type="HAMAP-Rule" id="MF_00059"/>
    </source>
</evidence>
<name>RPOA_AEGTA</name>
<dbReference type="EC" id="2.7.7.6" evidence="1"/>
<dbReference type="EMBL" id="Z77758">
    <property type="protein sequence ID" value="CAB01351.1"/>
    <property type="molecule type" value="Genomic_DNA"/>
</dbReference>
<dbReference type="EMBL" id="AY115910">
    <property type="protein sequence ID" value="AAM97419.1"/>
    <property type="molecule type" value="Genomic_DNA"/>
</dbReference>
<dbReference type="RefSeq" id="YP_008474330.1">
    <property type="nucleotide sequence ID" value="NC_022133.1"/>
</dbReference>
<dbReference type="SMR" id="P92429"/>
<dbReference type="GeneID" id="16693664"/>
<dbReference type="GO" id="GO:0009507">
    <property type="term" value="C:chloroplast"/>
    <property type="evidence" value="ECO:0007669"/>
    <property type="project" value="UniProtKB-SubCell"/>
</dbReference>
<dbReference type="GO" id="GO:0000428">
    <property type="term" value="C:DNA-directed RNA polymerase complex"/>
    <property type="evidence" value="ECO:0007669"/>
    <property type="project" value="UniProtKB-KW"/>
</dbReference>
<dbReference type="GO" id="GO:0005739">
    <property type="term" value="C:mitochondrion"/>
    <property type="evidence" value="ECO:0007669"/>
    <property type="project" value="GOC"/>
</dbReference>
<dbReference type="GO" id="GO:0003677">
    <property type="term" value="F:DNA binding"/>
    <property type="evidence" value="ECO:0007669"/>
    <property type="project" value="UniProtKB-UniRule"/>
</dbReference>
<dbReference type="GO" id="GO:0003899">
    <property type="term" value="F:DNA-directed RNA polymerase activity"/>
    <property type="evidence" value="ECO:0007669"/>
    <property type="project" value="UniProtKB-UniRule"/>
</dbReference>
<dbReference type="GO" id="GO:0046983">
    <property type="term" value="F:protein dimerization activity"/>
    <property type="evidence" value="ECO:0007669"/>
    <property type="project" value="InterPro"/>
</dbReference>
<dbReference type="GO" id="GO:0006351">
    <property type="term" value="P:DNA-templated transcription"/>
    <property type="evidence" value="ECO:0007669"/>
    <property type="project" value="UniProtKB-UniRule"/>
</dbReference>
<dbReference type="CDD" id="cd06928">
    <property type="entry name" value="RNAP_alpha_NTD"/>
    <property type="match status" value="1"/>
</dbReference>
<dbReference type="FunFam" id="2.170.120.12:FF:000001">
    <property type="entry name" value="DNA-directed RNA polymerase subunit alpha"/>
    <property type="match status" value="1"/>
</dbReference>
<dbReference type="Gene3D" id="1.10.150.20">
    <property type="entry name" value="5' to 3' exonuclease, C-terminal subdomain"/>
    <property type="match status" value="1"/>
</dbReference>
<dbReference type="Gene3D" id="2.170.120.12">
    <property type="entry name" value="DNA-directed RNA polymerase, insert domain"/>
    <property type="match status" value="1"/>
</dbReference>
<dbReference type="Gene3D" id="3.30.1360.10">
    <property type="entry name" value="RNA polymerase, RBP11-like subunit"/>
    <property type="match status" value="1"/>
</dbReference>
<dbReference type="HAMAP" id="MF_00059">
    <property type="entry name" value="RNApol_bact_RpoA"/>
    <property type="match status" value="1"/>
</dbReference>
<dbReference type="InterPro" id="IPR011262">
    <property type="entry name" value="DNA-dir_RNA_pol_insert"/>
</dbReference>
<dbReference type="InterPro" id="IPR011263">
    <property type="entry name" value="DNA-dir_RNA_pol_RpoA/D/Rpb3"/>
</dbReference>
<dbReference type="InterPro" id="IPR011773">
    <property type="entry name" value="DNA-dir_RpoA"/>
</dbReference>
<dbReference type="InterPro" id="IPR036603">
    <property type="entry name" value="RBP11-like"/>
</dbReference>
<dbReference type="InterPro" id="IPR011260">
    <property type="entry name" value="RNAP_asu_C"/>
</dbReference>
<dbReference type="InterPro" id="IPR036643">
    <property type="entry name" value="RNApol_insert_sf"/>
</dbReference>
<dbReference type="NCBIfam" id="TIGR02027">
    <property type="entry name" value="rpoA"/>
    <property type="match status" value="1"/>
</dbReference>
<dbReference type="Pfam" id="PF01000">
    <property type="entry name" value="RNA_pol_A_bac"/>
    <property type="match status" value="1"/>
</dbReference>
<dbReference type="Pfam" id="PF03118">
    <property type="entry name" value="RNA_pol_A_CTD"/>
    <property type="match status" value="1"/>
</dbReference>
<dbReference type="Pfam" id="PF01193">
    <property type="entry name" value="RNA_pol_L"/>
    <property type="match status" value="1"/>
</dbReference>
<dbReference type="SMART" id="SM00662">
    <property type="entry name" value="RPOLD"/>
    <property type="match status" value="1"/>
</dbReference>
<dbReference type="SUPFAM" id="SSF47789">
    <property type="entry name" value="C-terminal domain of RNA polymerase alpha subunit"/>
    <property type="match status" value="1"/>
</dbReference>
<dbReference type="SUPFAM" id="SSF56553">
    <property type="entry name" value="Insert subdomain of RNA polymerase alpha subunit"/>
    <property type="match status" value="1"/>
</dbReference>
<dbReference type="SUPFAM" id="SSF55257">
    <property type="entry name" value="RBP11-like subunits of RNA polymerase"/>
    <property type="match status" value="1"/>
</dbReference>
<proteinExistence type="inferred from homology"/>
<keyword id="KW-0150">Chloroplast</keyword>
<keyword id="KW-0240">DNA-directed RNA polymerase</keyword>
<keyword id="KW-0548">Nucleotidyltransferase</keyword>
<keyword id="KW-0934">Plastid</keyword>
<keyword id="KW-0804">Transcription</keyword>
<keyword id="KW-0808">Transferase</keyword>